<gene>
    <name type="primary">SURF2</name>
</gene>
<name>SURF2_HUMAN</name>
<organism>
    <name type="scientific">Homo sapiens</name>
    <name type="common">Human</name>
    <dbReference type="NCBI Taxonomy" id="9606"/>
    <lineage>
        <taxon>Eukaryota</taxon>
        <taxon>Metazoa</taxon>
        <taxon>Chordata</taxon>
        <taxon>Craniata</taxon>
        <taxon>Vertebrata</taxon>
        <taxon>Euteleostomi</taxon>
        <taxon>Mammalia</taxon>
        <taxon>Eutheria</taxon>
        <taxon>Euarchontoglires</taxon>
        <taxon>Primates</taxon>
        <taxon>Haplorrhini</taxon>
        <taxon>Catarrhini</taxon>
        <taxon>Hominidae</taxon>
        <taxon>Homo</taxon>
    </lineage>
</organism>
<evidence type="ECO:0000256" key="1">
    <source>
        <dbReference type="SAM" id="MobiDB-lite"/>
    </source>
</evidence>
<evidence type="ECO:0000269" key="2">
    <source>
    </source>
</evidence>
<evidence type="ECO:0000269" key="3">
    <source ref="2"/>
</evidence>
<evidence type="ECO:0000305" key="4"/>
<evidence type="ECO:0007744" key="5">
    <source>
    </source>
</evidence>
<evidence type="ECO:0007744" key="6">
    <source>
    </source>
</evidence>
<evidence type="ECO:0007744" key="7">
    <source>
    </source>
</evidence>
<evidence type="ECO:0007744" key="8">
    <source>
    </source>
</evidence>
<evidence type="ECO:0007744" key="9">
    <source>
    </source>
</evidence>
<protein>
    <recommendedName>
        <fullName>Surfeit locus protein 2</fullName>
        <shortName>Surf-2</shortName>
    </recommendedName>
</protein>
<sequence length="256" mass="29618">MSELPGDVRAFLREHPSLRLQTDARKVRCILTGHELPCRLPELQVYTRGKKYQRLVRASPAFDYAEFEPHIVPSTKNPHQLFCKLTLRHINKCPEHVLRHTQGRRYQRALCKYEECQKQGVEYVPACLVHRRRRREDQMDGDGPRPREAFWEPTSSDEGGAASDDSMTDLYPPELFTRKDLGSTEDGDGTDDFLTDKEDEKAKPPREKATDEGRRETTVYRGLVQKRGKKQLGSLKKKFKSHHRKPKSFSSCKQPG</sequence>
<reference key="1">
    <citation type="journal article" date="1994" name="DNA Cell Biol.">
        <title>The Surf-1 and Surf-2 genes and their essential bidirectional promoter elements are conserved between mouse and human.</title>
        <authorList>
            <person name="Lennard A."/>
            <person name="Gaston K."/>
            <person name="Fried M."/>
        </authorList>
    </citation>
    <scope>NUCLEOTIDE SEQUENCE [MRNA]</scope>
    <scope>VARIANT GLN-221</scope>
</reference>
<reference key="2">
    <citation type="submission" date="2004-06" db="EMBL/GenBank/DDBJ databases">
        <title>Cloning of human full open reading frames in Gateway(TM) system entry vector (pDONR201).</title>
        <authorList>
            <person name="Ebert L."/>
            <person name="Schick M."/>
            <person name="Neubert P."/>
            <person name="Schatten R."/>
            <person name="Henze S."/>
            <person name="Korn B."/>
        </authorList>
    </citation>
    <scope>NUCLEOTIDE SEQUENCE [LARGE SCALE MRNA]</scope>
    <scope>VARIANT SER-213</scope>
</reference>
<reference key="3">
    <citation type="journal article" date="2004" name="Nature">
        <title>DNA sequence and analysis of human chromosome 9.</title>
        <authorList>
            <person name="Humphray S.J."/>
            <person name="Oliver K."/>
            <person name="Hunt A.R."/>
            <person name="Plumb R.W."/>
            <person name="Loveland J.E."/>
            <person name="Howe K.L."/>
            <person name="Andrews T.D."/>
            <person name="Searle S."/>
            <person name="Hunt S.E."/>
            <person name="Scott C.E."/>
            <person name="Jones M.C."/>
            <person name="Ainscough R."/>
            <person name="Almeida J.P."/>
            <person name="Ambrose K.D."/>
            <person name="Ashwell R.I.S."/>
            <person name="Babbage A.K."/>
            <person name="Babbage S."/>
            <person name="Bagguley C.L."/>
            <person name="Bailey J."/>
            <person name="Banerjee R."/>
            <person name="Barker D.J."/>
            <person name="Barlow K.F."/>
            <person name="Bates K."/>
            <person name="Beasley H."/>
            <person name="Beasley O."/>
            <person name="Bird C.P."/>
            <person name="Bray-Allen S."/>
            <person name="Brown A.J."/>
            <person name="Brown J.Y."/>
            <person name="Burford D."/>
            <person name="Burrill W."/>
            <person name="Burton J."/>
            <person name="Carder C."/>
            <person name="Carter N.P."/>
            <person name="Chapman J.C."/>
            <person name="Chen Y."/>
            <person name="Clarke G."/>
            <person name="Clark S.Y."/>
            <person name="Clee C.M."/>
            <person name="Clegg S."/>
            <person name="Collier R.E."/>
            <person name="Corby N."/>
            <person name="Crosier M."/>
            <person name="Cummings A.T."/>
            <person name="Davies J."/>
            <person name="Dhami P."/>
            <person name="Dunn M."/>
            <person name="Dutta I."/>
            <person name="Dyer L.W."/>
            <person name="Earthrowl M.E."/>
            <person name="Faulkner L."/>
            <person name="Fleming C.J."/>
            <person name="Frankish A."/>
            <person name="Frankland J.A."/>
            <person name="French L."/>
            <person name="Fricker D.G."/>
            <person name="Garner P."/>
            <person name="Garnett J."/>
            <person name="Ghori J."/>
            <person name="Gilbert J.G.R."/>
            <person name="Glison C."/>
            <person name="Grafham D.V."/>
            <person name="Gribble S."/>
            <person name="Griffiths C."/>
            <person name="Griffiths-Jones S."/>
            <person name="Grocock R."/>
            <person name="Guy J."/>
            <person name="Hall R.E."/>
            <person name="Hammond S."/>
            <person name="Harley J.L."/>
            <person name="Harrison E.S.I."/>
            <person name="Hart E.A."/>
            <person name="Heath P.D."/>
            <person name="Henderson C.D."/>
            <person name="Hopkins B.L."/>
            <person name="Howard P.J."/>
            <person name="Howden P.J."/>
            <person name="Huckle E."/>
            <person name="Johnson C."/>
            <person name="Johnson D."/>
            <person name="Joy A.A."/>
            <person name="Kay M."/>
            <person name="Keenan S."/>
            <person name="Kershaw J.K."/>
            <person name="Kimberley A.M."/>
            <person name="King A."/>
            <person name="Knights A."/>
            <person name="Laird G.K."/>
            <person name="Langford C."/>
            <person name="Lawlor S."/>
            <person name="Leongamornlert D.A."/>
            <person name="Leversha M."/>
            <person name="Lloyd C."/>
            <person name="Lloyd D.M."/>
            <person name="Lovell J."/>
            <person name="Martin S."/>
            <person name="Mashreghi-Mohammadi M."/>
            <person name="Matthews L."/>
            <person name="McLaren S."/>
            <person name="McLay K.E."/>
            <person name="McMurray A."/>
            <person name="Milne S."/>
            <person name="Nickerson T."/>
            <person name="Nisbett J."/>
            <person name="Nordsiek G."/>
            <person name="Pearce A.V."/>
            <person name="Peck A.I."/>
            <person name="Porter K.M."/>
            <person name="Pandian R."/>
            <person name="Pelan S."/>
            <person name="Phillimore B."/>
            <person name="Povey S."/>
            <person name="Ramsey Y."/>
            <person name="Rand V."/>
            <person name="Scharfe M."/>
            <person name="Sehra H.K."/>
            <person name="Shownkeen R."/>
            <person name="Sims S.K."/>
            <person name="Skuce C.D."/>
            <person name="Smith M."/>
            <person name="Steward C.A."/>
            <person name="Swarbreck D."/>
            <person name="Sycamore N."/>
            <person name="Tester J."/>
            <person name="Thorpe A."/>
            <person name="Tracey A."/>
            <person name="Tromans A."/>
            <person name="Thomas D.W."/>
            <person name="Wall M."/>
            <person name="Wallis J.M."/>
            <person name="West A.P."/>
            <person name="Whitehead S.L."/>
            <person name="Willey D.L."/>
            <person name="Williams S.A."/>
            <person name="Wilming L."/>
            <person name="Wray P.W."/>
            <person name="Young L."/>
            <person name="Ashurst J.L."/>
            <person name="Coulson A."/>
            <person name="Blocker H."/>
            <person name="Durbin R.M."/>
            <person name="Sulston J.E."/>
            <person name="Hubbard T."/>
            <person name="Jackson M.J."/>
            <person name="Bentley D.R."/>
            <person name="Beck S."/>
            <person name="Rogers J."/>
            <person name="Dunham I."/>
        </authorList>
    </citation>
    <scope>NUCLEOTIDE SEQUENCE [LARGE SCALE GENOMIC DNA]</scope>
</reference>
<reference key="4">
    <citation type="journal article" date="2004" name="Genome Res.">
        <title>The status, quality, and expansion of the NIH full-length cDNA project: the Mammalian Gene Collection (MGC).</title>
        <authorList>
            <consortium name="The MGC Project Team"/>
        </authorList>
    </citation>
    <scope>NUCLEOTIDE SEQUENCE [LARGE SCALE MRNA]</scope>
    <source>
        <tissue>Lung</tissue>
    </source>
</reference>
<reference key="5">
    <citation type="journal article" date="2008" name="Proc. Natl. Acad. Sci. U.S.A.">
        <title>A quantitative atlas of mitotic phosphorylation.</title>
        <authorList>
            <person name="Dephoure N."/>
            <person name="Zhou C."/>
            <person name="Villen J."/>
            <person name="Beausoleil S.A."/>
            <person name="Bakalarski C.E."/>
            <person name="Elledge S.J."/>
            <person name="Gygi S.P."/>
        </authorList>
    </citation>
    <scope>PHOSPHORYLATION [LARGE SCALE ANALYSIS] AT THR-190 AND THR-195</scope>
    <scope>IDENTIFICATION BY MASS SPECTROMETRY [LARGE SCALE ANALYSIS]</scope>
    <source>
        <tissue>Cervix carcinoma</tissue>
    </source>
</reference>
<reference key="6">
    <citation type="journal article" date="2009" name="Anal. Chem.">
        <title>Lys-N and trypsin cover complementary parts of the phosphoproteome in a refined SCX-based approach.</title>
        <authorList>
            <person name="Gauci S."/>
            <person name="Helbig A.O."/>
            <person name="Slijper M."/>
            <person name="Krijgsveld J."/>
            <person name="Heck A.J."/>
            <person name="Mohammed S."/>
        </authorList>
    </citation>
    <scope>IDENTIFICATION BY MASS SPECTROMETRY [LARGE SCALE ANALYSIS]</scope>
</reference>
<reference key="7">
    <citation type="journal article" date="2009" name="Sci. Signal.">
        <title>Quantitative phosphoproteomic analysis of T cell receptor signaling reveals system-wide modulation of protein-protein interactions.</title>
        <authorList>
            <person name="Mayya V."/>
            <person name="Lundgren D.H."/>
            <person name="Hwang S.-I."/>
            <person name="Rezaul K."/>
            <person name="Wu L."/>
            <person name="Eng J.K."/>
            <person name="Rodionov V."/>
            <person name="Han D.K."/>
        </authorList>
    </citation>
    <scope>PHOSPHORYLATION [LARGE SCALE ANALYSIS] AT THR-190 AND THR-195</scope>
    <scope>IDENTIFICATION BY MASS SPECTROMETRY [LARGE SCALE ANALYSIS]</scope>
    <source>
        <tissue>Leukemic T-cell</tissue>
    </source>
</reference>
<reference key="8">
    <citation type="journal article" date="2010" name="Sci. Signal.">
        <title>Quantitative phosphoproteomics reveals widespread full phosphorylation site occupancy during mitosis.</title>
        <authorList>
            <person name="Olsen J.V."/>
            <person name="Vermeulen M."/>
            <person name="Santamaria A."/>
            <person name="Kumar C."/>
            <person name="Miller M.L."/>
            <person name="Jensen L.J."/>
            <person name="Gnad F."/>
            <person name="Cox J."/>
            <person name="Jensen T.S."/>
            <person name="Nigg E.A."/>
            <person name="Brunak S."/>
            <person name="Mann M."/>
        </authorList>
    </citation>
    <scope>PHOSPHORYLATION [LARGE SCALE ANALYSIS] AT THR-190</scope>
    <scope>IDENTIFICATION BY MASS SPECTROMETRY [LARGE SCALE ANALYSIS]</scope>
    <source>
        <tissue>Cervix carcinoma</tissue>
    </source>
</reference>
<reference key="9">
    <citation type="journal article" date="2011" name="Sci. Signal.">
        <title>System-wide temporal characterization of the proteome and phosphoproteome of human embryonic stem cell differentiation.</title>
        <authorList>
            <person name="Rigbolt K.T."/>
            <person name="Prokhorova T.A."/>
            <person name="Akimov V."/>
            <person name="Henningsen J."/>
            <person name="Johansen P.T."/>
            <person name="Kratchmarova I."/>
            <person name="Kassem M."/>
            <person name="Mann M."/>
            <person name="Olsen J.V."/>
            <person name="Blagoev B."/>
        </authorList>
    </citation>
    <scope>PHOSPHORYLATION [LARGE SCALE ANALYSIS] AT THR-190 AND THR-195</scope>
    <scope>IDENTIFICATION BY MASS SPECTROMETRY [LARGE SCALE ANALYSIS]</scope>
</reference>
<reference key="10">
    <citation type="journal article" date="2013" name="J. Proteome Res.">
        <title>Toward a comprehensive characterization of a human cancer cell phosphoproteome.</title>
        <authorList>
            <person name="Zhou H."/>
            <person name="Di Palma S."/>
            <person name="Preisinger C."/>
            <person name="Peng M."/>
            <person name="Polat A.N."/>
            <person name="Heck A.J."/>
            <person name="Mohammed S."/>
        </authorList>
    </citation>
    <scope>PHOSPHORYLATION [LARGE SCALE ANALYSIS] AT THR-190 AND THR-195</scope>
    <scope>IDENTIFICATION BY MASS SPECTROMETRY [LARGE SCALE ANALYSIS]</scope>
    <source>
        <tissue>Cervix carcinoma</tissue>
        <tissue>Erythroleukemia</tissue>
    </source>
</reference>
<reference key="11">
    <citation type="journal article" date="2014" name="J. Proteomics">
        <title>An enzyme assisted RP-RPLC approach for in-depth analysis of human liver phosphoproteome.</title>
        <authorList>
            <person name="Bian Y."/>
            <person name="Song C."/>
            <person name="Cheng K."/>
            <person name="Dong M."/>
            <person name="Wang F."/>
            <person name="Huang J."/>
            <person name="Sun D."/>
            <person name="Wang L."/>
            <person name="Ye M."/>
            <person name="Zou H."/>
        </authorList>
    </citation>
    <scope>IDENTIFICATION BY MASS SPECTROMETRY [LARGE SCALE ANALYSIS]</scope>
    <source>
        <tissue>Liver</tissue>
    </source>
</reference>
<dbReference type="EMBL" id="Z35094">
    <property type="protein sequence ID" value="CAA84477.1"/>
    <property type="molecule type" value="mRNA"/>
</dbReference>
<dbReference type="EMBL" id="CR456753">
    <property type="protein sequence ID" value="CAG33034.1"/>
    <property type="molecule type" value="mRNA"/>
</dbReference>
<dbReference type="EMBL" id="AL158826">
    <property type="protein sequence ID" value="CAI12838.1"/>
    <property type="molecule type" value="Genomic_DNA"/>
</dbReference>
<dbReference type="EMBL" id="BC014411">
    <property type="protein sequence ID" value="AAH14411.1"/>
    <property type="molecule type" value="mRNA"/>
</dbReference>
<dbReference type="CCDS" id="CCDS6967.1"/>
<dbReference type="PIR" id="S57747">
    <property type="entry name" value="S57747"/>
</dbReference>
<dbReference type="RefSeq" id="NP_001265857.1">
    <property type="nucleotide sequence ID" value="NM_001278928.1"/>
</dbReference>
<dbReference type="RefSeq" id="NP_059973.4">
    <property type="nucleotide sequence ID" value="NM_017503.4"/>
</dbReference>
<dbReference type="BioGRID" id="112702">
    <property type="interactions" value="65"/>
</dbReference>
<dbReference type="FunCoup" id="Q15527">
    <property type="interactions" value="511"/>
</dbReference>
<dbReference type="IntAct" id="Q15527">
    <property type="interactions" value="29"/>
</dbReference>
<dbReference type="MINT" id="Q15527"/>
<dbReference type="STRING" id="9606.ENSP00000361032"/>
<dbReference type="iPTMnet" id="Q15527"/>
<dbReference type="PhosphoSitePlus" id="Q15527"/>
<dbReference type="BioMuta" id="SURF2"/>
<dbReference type="DMDM" id="317373505"/>
<dbReference type="jPOST" id="Q15527"/>
<dbReference type="MassIVE" id="Q15527"/>
<dbReference type="PaxDb" id="9606-ENSP00000361032"/>
<dbReference type="PeptideAtlas" id="Q15527"/>
<dbReference type="ProteomicsDB" id="60618"/>
<dbReference type="Pumba" id="Q15527"/>
<dbReference type="Antibodypedia" id="31850">
    <property type="antibodies" value="48 antibodies from 16 providers"/>
</dbReference>
<dbReference type="DNASU" id="6835"/>
<dbReference type="Ensembl" id="ENST00000371964.5">
    <property type="protein sequence ID" value="ENSP00000361032.4"/>
    <property type="gene ID" value="ENSG00000148291.10"/>
</dbReference>
<dbReference type="Ensembl" id="ENST00000630633.2">
    <property type="protein sequence ID" value="ENSP00000487370.1"/>
    <property type="gene ID" value="ENSG00000281024.3"/>
</dbReference>
<dbReference type="GeneID" id="6835"/>
<dbReference type="KEGG" id="hsa:6835"/>
<dbReference type="MANE-Select" id="ENST00000371964.5">
    <property type="protein sequence ID" value="ENSP00000361032.4"/>
    <property type="RefSeq nucleotide sequence ID" value="NM_017503.5"/>
    <property type="RefSeq protein sequence ID" value="NP_059973.4"/>
</dbReference>
<dbReference type="UCSC" id="uc004cdi.4">
    <property type="organism name" value="human"/>
</dbReference>
<dbReference type="AGR" id="HGNC:11475"/>
<dbReference type="CTD" id="6835"/>
<dbReference type="DisGeNET" id="6835"/>
<dbReference type="GeneCards" id="SURF2"/>
<dbReference type="HGNC" id="HGNC:11475">
    <property type="gene designation" value="SURF2"/>
</dbReference>
<dbReference type="HPA" id="ENSG00000148291">
    <property type="expression patterns" value="Tissue enhanced (testis)"/>
</dbReference>
<dbReference type="MIM" id="185630">
    <property type="type" value="gene"/>
</dbReference>
<dbReference type="neXtProt" id="NX_Q15527"/>
<dbReference type="OpenTargets" id="ENSG00000148291"/>
<dbReference type="PharmGKB" id="PA36260"/>
<dbReference type="VEuPathDB" id="HostDB:ENSG00000148291"/>
<dbReference type="eggNOG" id="ENOG502RYGJ">
    <property type="taxonomic scope" value="Eukaryota"/>
</dbReference>
<dbReference type="GeneTree" id="ENSGT00390000016800"/>
<dbReference type="HOGENOM" id="CLU_094630_1_0_1"/>
<dbReference type="InParanoid" id="Q15527"/>
<dbReference type="OMA" id="QYEPYIV"/>
<dbReference type="OrthoDB" id="127285at2759"/>
<dbReference type="PAN-GO" id="Q15527">
    <property type="GO annotations" value="0 GO annotations based on evolutionary models"/>
</dbReference>
<dbReference type="PhylomeDB" id="Q15527"/>
<dbReference type="TreeFam" id="TF329107"/>
<dbReference type="PathwayCommons" id="Q15527"/>
<dbReference type="SignaLink" id="Q15527"/>
<dbReference type="BioGRID-ORCS" id="6835">
    <property type="hits" value="29 hits in 1160 CRISPR screens"/>
</dbReference>
<dbReference type="ChiTaRS" id="SURF2">
    <property type="organism name" value="human"/>
</dbReference>
<dbReference type="GenomeRNAi" id="6835"/>
<dbReference type="Pharos" id="Q15527">
    <property type="development level" value="Tdark"/>
</dbReference>
<dbReference type="PRO" id="PR:Q15527"/>
<dbReference type="Proteomes" id="UP000005640">
    <property type="component" value="Chromosome 9"/>
</dbReference>
<dbReference type="RNAct" id="Q15527">
    <property type="molecule type" value="protein"/>
</dbReference>
<dbReference type="Bgee" id="ENSG00000148291">
    <property type="expression patterns" value="Expressed in left testis and 101 other cell types or tissues"/>
</dbReference>
<dbReference type="GO" id="GO:0016607">
    <property type="term" value="C:nuclear speck"/>
    <property type="evidence" value="ECO:0000314"/>
    <property type="project" value="HPA"/>
</dbReference>
<dbReference type="GO" id="GO:0005730">
    <property type="term" value="C:nucleolus"/>
    <property type="evidence" value="ECO:0000314"/>
    <property type="project" value="HPA"/>
</dbReference>
<dbReference type="GO" id="GO:0005654">
    <property type="term" value="C:nucleoplasm"/>
    <property type="evidence" value="ECO:0000314"/>
    <property type="project" value="HPA"/>
</dbReference>
<dbReference type="GO" id="GO:0005886">
    <property type="term" value="C:plasma membrane"/>
    <property type="evidence" value="ECO:0000314"/>
    <property type="project" value="HPA"/>
</dbReference>
<dbReference type="InterPro" id="IPR008833">
    <property type="entry name" value="Surf2"/>
</dbReference>
<dbReference type="PANTHER" id="PTHR34348">
    <property type="entry name" value="SURFEIT LOCUS PROTEIN 2"/>
    <property type="match status" value="1"/>
</dbReference>
<dbReference type="PANTHER" id="PTHR34348:SF1">
    <property type="entry name" value="SURFEIT LOCUS PROTEIN 2"/>
    <property type="match status" value="1"/>
</dbReference>
<dbReference type="Pfam" id="PF05477">
    <property type="entry name" value="SURF2"/>
    <property type="match status" value="1"/>
</dbReference>
<keyword id="KW-0597">Phosphoprotein</keyword>
<keyword id="KW-1267">Proteomics identification</keyword>
<keyword id="KW-1185">Reference proteome</keyword>
<accession>Q15527</accession>
<accession>Q6IBP9</accession>
<accession>Q96CD1</accession>
<feature type="chain" id="PRO_0000072319" description="Surfeit locus protein 2">
    <location>
        <begin position="1"/>
        <end position="256"/>
    </location>
</feature>
<feature type="region of interest" description="Disordered" evidence="1">
    <location>
        <begin position="133"/>
        <end position="256"/>
    </location>
</feature>
<feature type="compositionally biased region" description="Basic and acidic residues" evidence="1">
    <location>
        <begin position="135"/>
        <end position="150"/>
    </location>
</feature>
<feature type="compositionally biased region" description="Low complexity" evidence="1">
    <location>
        <begin position="156"/>
        <end position="165"/>
    </location>
</feature>
<feature type="compositionally biased region" description="Acidic residues" evidence="1">
    <location>
        <begin position="183"/>
        <end position="193"/>
    </location>
</feature>
<feature type="compositionally biased region" description="Basic and acidic residues" evidence="1">
    <location>
        <begin position="194"/>
        <end position="218"/>
    </location>
</feature>
<feature type="compositionally biased region" description="Basic residues" evidence="1">
    <location>
        <begin position="224"/>
        <end position="247"/>
    </location>
</feature>
<feature type="modified residue" description="Phosphothreonine" evidence="5 6 7 8 9">
    <location>
        <position position="190"/>
    </location>
</feature>
<feature type="modified residue" description="Phosphothreonine" evidence="5 6 8 9">
    <location>
        <position position="195"/>
    </location>
</feature>
<feature type="sequence variant" id="VAR_014785" description="In dbSNP:rs12763." evidence="3">
    <original>G</original>
    <variation>S</variation>
    <location>
        <position position="213"/>
    </location>
</feature>
<feature type="sequence variant" id="VAR_057001" description="In dbSNP:rs7863933." evidence="2">
    <original>R</original>
    <variation>Q</variation>
    <location>
        <position position="221"/>
    </location>
</feature>
<feature type="sequence conflict" description="In Ref. 1; CAA84477." evidence="4" ref="1">
    <original>A</original>
    <variation>T</variation>
    <location>
        <position position="24"/>
    </location>
</feature>
<feature type="sequence conflict" description="In Ref. 1; CAA84477." evidence="4" ref="1">
    <original>P</original>
    <variation>T</variation>
    <location>
        <position position="37"/>
    </location>
</feature>
<feature type="sequence conflict" description="In Ref. 1; CAA84477." evidence="4" ref="1">
    <original>DG</original>
    <variation>EA</variation>
    <location>
        <begin position="142"/>
        <end position="143"/>
    </location>
</feature>
<feature type="sequence conflict" description="In Ref. 1; CAA84477." evidence="4" ref="1">
    <original>G</original>
    <variation>A</variation>
    <location>
        <position position="160"/>
    </location>
</feature>
<proteinExistence type="evidence at protein level"/>
<comment type="interaction">
    <interactant intactId="EBI-723863">
        <id>Q15527</id>
    </interactant>
    <interactant intactId="EBI-358018">
        <id>P46777</id>
        <label>RPL5</label>
    </interactant>
    <organismsDiffer>false</organismsDiffer>
    <experiments>6</experiments>
</comment>
<comment type="similarity">
    <text evidence="4">Belongs to the SURF2 family.</text>
</comment>